<comment type="function">
    <text evidence="1">Binds directly to 16S ribosomal RNA.</text>
</comment>
<comment type="similarity">
    <text evidence="1">Belongs to the bacterial ribosomal protein bS20 family.</text>
</comment>
<feature type="chain" id="PRO_0000168053" description="Small ribosomal subunit protein bS20">
    <location>
        <begin position="1"/>
        <end position="95"/>
    </location>
</feature>
<feature type="region of interest" description="Disordered" evidence="2">
    <location>
        <begin position="1"/>
        <end position="22"/>
    </location>
</feature>
<feature type="compositionally biased region" description="Basic and acidic residues" evidence="2">
    <location>
        <begin position="12"/>
        <end position="22"/>
    </location>
</feature>
<reference key="1">
    <citation type="journal article" date="2003" name="Lancet">
        <title>Sequencing and analysis of the genome of the Whipple's disease bacterium Tropheryma whipplei.</title>
        <authorList>
            <person name="Bentley S.D."/>
            <person name="Maiwald M."/>
            <person name="Murphy L.D."/>
            <person name="Pallen M.J."/>
            <person name="Yeats C.A."/>
            <person name="Dover L.G."/>
            <person name="Norbertczak H.T."/>
            <person name="Besra G.S."/>
            <person name="Quail M.A."/>
            <person name="Harris D.E."/>
            <person name="von Herbay A."/>
            <person name="Goble A."/>
            <person name="Rutter S."/>
            <person name="Squares R."/>
            <person name="Squares S."/>
            <person name="Barrell B.G."/>
            <person name="Parkhill J."/>
            <person name="Relman D.A."/>
        </authorList>
    </citation>
    <scope>NUCLEOTIDE SEQUENCE [LARGE SCALE GENOMIC DNA]</scope>
    <source>
        <strain>TW08/27</strain>
    </source>
</reference>
<dbReference type="EMBL" id="BX251411">
    <property type="protein sequence ID" value="CAD67162.1"/>
    <property type="molecule type" value="Genomic_DNA"/>
</dbReference>
<dbReference type="RefSeq" id="WP_011096442.1">
    <property type="nucleotide sequence ID" value="NC_004551.1"/>
</dbReference>
<dbReference type="SMR" id="Q83HN3"/>
<dbReference type="GeneID" id="67388274"/>
<dbReference type="KEGG" id="tws:TW495"/>
<dbReference type="HOGENOM" id="CLU_160655_0_1_11"/>
<dbReference type="GO" id="GO:0005829">
    <property type="term" value="C:cytosol"/>
    <property type="evidence" value="ECO:0007669"/>
    <property type="project" value="TreeGrafter"/>
</dbReference>
<dbReference type="GO" id="GO:0015935">
    <property type="term" value="C:small ribosomal subunit"/>
    <property type="evidence" value="ECO:0007669"/>
    <property type="project" value="TreeGrafter"/>
</dbReference>
<dbReference type="GO" id="GO:0070181">
    <property type="term" value="F:small ribosomal subunit rRNA binding"/>
    <property type="evidence" value="ECO:0007669"/>
    <property type="project" value="TreeGrafter"/>
</dbReference>
<dbReference type="GO" id="GO:0003735">
    <property type="term" value="F:structural constituent of ribosome"/>
    <property type="evidence" value="ECO:0007669"/>
    <property type="project" value="InterPro"/>
</dbReference>
<dbReference type="GO" id="GO:0006412">
    <property type="term" value="P:translation"/>
    <property type="evidence" value="ECO:0007669"/>
    <property type="project" value="UniProtKB-UniRule"/>
</dbReference>
<dbReference type="FunFam" id="1.20.58.110:FF:000001">
    <property type="entry name" value="30S ribosomal protein S20"/>
    <property type="match status" value="1"/>
</dbReference>
<dbReference type="Gene3D" id="1.20.58.110">
    <property type="entry name" value="Ribosomal protein S20"/>
    <property type="match status" value="1"/>
</dbReference>
<dbReference type="HAMAP" id="MF_00500">
    <property type="entry name" value="Ribosomal_bS20"/>
    <property type="match status" value="1"/>
</dbReference>
<dbReference type="InterPro" id="IPR002583">
    <property type="entry name" value="Ribosomal_bS20"/>
</dbReference>
<dbReference type="InterPro" id="IPR036510">
    <property type="entry name" value="Ribosomal_bS20_sf"/>
</dbReference>
<dbReference type="NCBIfam" id="TIGR00029">
    <property type="entry name" value="S20"/>
    <property type="match status" value="1"/>
</dbReference>
<dbReference type="PANTHER" id="PTHR33398">
    <property type="entry name" value="30S RIBOSOMAL PROTEIN S20"/>
    <property type="match status" value="1"/>
</dbReference>
<dbReference type="PANTHER" id="PTHR33398:SF1">
    <property type="entry name" value="SMALL RIBOSOMAL SUBUNIT PROTEIN BS20C"/>
    <property type="match status" value="1"/>
</dbReference>
<dbReference type="Pfam" id="PF01649">
    <property type="entry name" value="Ribosomal_S20p"/>
    <property type="match status" value="1"/>
</dbReference>
<dbReference type="SUPFAM" id="SSF46992">
    <property type="entry name" value="Ribosomal protein S20"/>
    <property type="match status" value="1"/>
</dbReference>
<gene>
    <name evidence="1" type="primary">rpsT</name>
    <name type="ordered locus">TW495</name>
</gene>
<proteinExistence type="inferred from homology"/>
<sequence>MANIKSQIKRNRTNENNRLRNKAVKSELKTLIRLVKRAARDNDLPRAEDALRRASLKLDRAVSKGVIHPNQAANRKSGIAKLVVATRLRNSTAGE</sequence>
<evidence type="ECO:0000255" key="1">
    <source>
        <dbReference type="HAMAP-Rule" id="MF_00500"/>
    </source>
</evidence>
<evidence type="ECO:0000256" key="2">
    <source>
        <dbReference type="SAM" id="MobiDB-lite"/>
    </source>
</evidence>
<evidence type="ECO:0000305" key="3"/>
<accession>Q83HN3</accession>
<protein>
    <recommendedName>
        <fullName evidence="1">Small ribosomal subunit protein bS20</fullName>
    </recommendedName>
    <alternativeName>
        <fullName evidence="3">30S ribosomal protein S20</fullName>
    </alternativeName>
</protein>
<name>RS20_TROW8</name>
<keyword id="KW-0687">Ribonucleoprotein</keyword>
<keyword id="KW-0689">Ribosomal protein</keyword>
<keyword id="KW-0694">RNA-binding</keyword>
<keyword id="KW-0699">rRNA-binding</keyword>
<organism>
    <name type="scientific">Tropheryma whipplei (strain TW08/27)</name>
    <name type="common">Whipple's bacillus</name>
    <dbReference type="NCBI Taxonomy" id="218496"/>
    <lineage>
        <taxon>Bacteria</taxon>
        <taxon>Bacillati</taxon>
        <taxon>Actinomycetota</taxon>
        <taxon>Actinomycetes</taxon>
        <taxon>Micrococcales</taxon>
        <taxon>Tropherymataceae</taxon>
        <taxon>Tropheryma</taxon>
    </lineage>
</organism>